<feature type="chain" id="PRO_0000454947" description="Proliferating cell nuclear antigen 2">
    <location>
        <begin position="1"/>
        <end position="264"/>
    </location>
</feature>
<gene>
    <name evidence="5" type="primary">PCNA2</name>
    <name evidence="9" type="ORF">PF3D7_1226600</name>
</gene>
<accession>Q7KQJ9</accession>
<accession>Q8I6B5</accession>
<accession>Q8WSN0</accession>
<evidence type="ECO:0000255" key="1">
    <source>
        <dbReference type="RuleBase" id="RU003671"/>
    </source>
</evidence>
<evidence type="ECO:0000269" key="2">
    <source>
    </source>
</evidence>
<evidence type="ECO:0000269" key="3">
    <source>
    </source>
</evidence>
<evidence type="ECO:0000269" key="4">
    <source>
    </source>
</evidence>
<evidence type="ECO:0000303" key="5">
    <source>
    </source>
</evidence>
<evidence type="ECO:0000305" key="6"/>
<evidence type="ECO:0000312" key="7">
    <source>
        <dbReference type="EMBL" id="AAG37983.1"/>
    </source>
</evidence>
<evidence type="ECO:0000312" key="8">
    <source>
        <dbReference type="EMBL" id="AAN34792.1"/>
    </source>
</evidence>
<evidence type="ECO:0000312" key="9">
    <source>
        <dbReference type="EMBL" id="CZT99425.1"/>
    </source>
</evidence>
<evidence type="ECO:0000312" key="10">
    <source>
        <dbReference type="Proteomes" id="UP000001450"/>
    </source>
</evidence>
<protein>
    <recommendedName>
        <fullName evidence="5">Proliferating cell nuclear antigen 2</fullName>
        <shortName evidence="5">PfPCNA2</shortName>
    </recommendedName>
</protein>
<comment type="function">
    <text evidence="4">May be involved in DNA damage response (PubMed:26251451). Appears not to be involved in DNA replication in trophozoites (PubMed:26251451).</text>
</comment>
<comment type="subunit">
    <text evidence="2 3 4">Homotrimer (PubMed:12413950, PubMed:12464414, PubMed:26251451). Oligomer (PubMed:12413950). Interacts with ORC1 (via PIP-box motif) (PubMed:26251451). Interacts with FEN1 (PubMed:26251451).</text>
</comment>
<comment type="subcellular location">
    <subcellularLocation>
        <location evidence="4">Nucleus</location>
    </subcellularLocation>
    <subcellularLocation>
        <location evidence="4">Chromosome</location>
    </subcellularLocation>
    <subcellularLocation>
        <location evidence="4">Cytoplasm</location>
    </subcellularLocation>
    <text evidence="4">Unlike PCNA1, does not localize to nuclear foci (PubMed:26251451). Enriched in the nucleus in response to DNA damage (PubMed:26251451).</text>
</comment>
<comment type="developmental stage">
    <text evidence="2 3 4">Expressed during the asexual blood stage; expression is low at the ring stage, increases in trophozoites and early schizonts and sharply decreases in late schizonts (at protein level) (PubMed:12413950, PubMed:12464414, PubMed:26251451). Expressed during the sexual blood stage (PubMed:12464414).</text>
</comment>
<comment type="induction">
    <text evidence="4">Induced by DNA damage (at protein level).</text>
</comment>
<comment type="similarity">
    <text evidence="1">Belongs to the PCNA family.</text>
</comment>
<keyword id="KW-0158">Chromosome</keyword>
<keyword id="KW-0963">Cytoplasm</keyword>
<keyword id="KW-0238">DNA-binding</keyword>
<keyword id="KW-0539">Nucleus</keyword>
<keyword id="KW-1185">Reference proteome</keyword>
<reference evidence="8" key="1">
    <citation type="journal article" date="2002" name="Biochem. Biophys. Res. Commun.">
        <title>Molecular characterization and expression of an alternate proliferating cell nuclear antigen homologue, PfPCNA2, in Plasmodium falciparum.</title>
        <authorList>
            <person name="Patterson S."/>
            <person name="Whittle C."/>
            <person name="Robert C."/>
            <person name="Chakrabarti D."/>
        </authorList>
    </citation>
    <scope>NUCLEOTIDE SEQUENCE [MRNA]</scope>
    <scope>SUBUNIT</scope>
    <scope>DEVELOPMENTAL STAGE</scope>
</reference>
<reference evidence="7" key="2">
    <citation type="journal article" date="2002" name="Int. J. Parasitol.">
        <title>Identification of a second proliferating cell nuclear antigen in the human malarial pathogen Plasmodium falciparum.</title>
        <authorList>
            <person name="Li J.L."/>
            <person name="Warren A.V."/>
            <person name="Cox L.S."/>
        </authorList>
    </citation>
    <scope>NUCLEOTIDE SEQUENCE [GENOMIC DNA]</scope>
    <scope>SUBUNIT</scope>
    <scope>DEVELOPMENTAL STAGE</scope>
</reference>
<reference evidence="10" key="3">
    <citation type="journal article" date="2002" name="Nature">
        <title>Genome sequence of the human malaria parasite Plasmodium falciparum.</title>
        <authorList>
            <person name="Gardner M.J."/>
            <person name="Hall N."/>
            <person name="Fung E."/>
            <person name="White O."/>
            <person name="Berriman M."/>
            <person name="Hyman R.W."/>
            <person name="Carlton J.M."/>
            <person name="Pain A."/>
            <person name="Nelson K.E."/>
            <person name="Bowman S."/>
            <person name="Paulsen I.T."/>
            <person name="James K.D."/>
            <person name="Eisen J.A."/>
            <person name="Rutherford K.M."/>
            <person name="Salzberg S.L."/>
            <person name="Craig A."/>
            <person name="Kyes S."/>
            <person name="Chan M.-S."/>
            <person name="Nene V."/>
            <person name="Shallom S.J."/>
            <person name="Suh B."/>
            <person name="Peterson J."/>
            <person name="Angiuoli S."/>
            <person name="Pertea M."/>
            <person name="Allen J."/>
            <person name="Selengut J."/>
            <person name="Haft D."/>
            <person name="Mather M.W."/>
            <person name="Vaidya A.B."/>
            <person name="Martin D.M.A."/>
            <person name="Fairlamb A.H."/>
            <person name="Fraunholz M.J."/>
            <person name="Roos D.S."/>
            <person name="Ralph S.A."/>
            <person name="McFadden G.I."/>
            <person name="Cummings L.M."/>
            <person name="Subramanian G.M."/>
            <person name="Mungall C."/>
            <person name="Venter J.C."/>
            <person name="Carucci D.J."/>
            <person name="Hoffman S.L."/>
            <person name="Newbold C."/>
            <person name="Davis R.W."/>
            <person name="Fraser C.M."/>
            <person name="Barrell B.G."/>
        </authorList>
    </citation>
    <scope>NUCLEOTIDE SEQUENCE [LARGE SCALE GENOMIC DNA]</scope>
    <source>
        <strain evidence="10">3D7</strain>
    </source>
</reference>
<reference evidence="6" key="4">
    <citation type="journal article" date="2015" name="Biochem. J.">
        <title>Functional dissection of proliferating-cell nuclear antigens (1 and 2) in human malarial parasite Plasmodium falciparum: possible involvement in DNA replication and DNA damage response.</title>
        <authorList>
            <person name="Mitra P."/>
            <person name="Banu K."/>
            <person name="Deshmukh A.S."/>
            <person name="Subbarao N."/>
            <person name="Dhar S.K."/>
        </authorList>
    </citation>
    <scope>FUNCTION</scope>
    <scope>SUBUNIT</scope>
    <scope>INTERACTION WITH ORC1 AND FEN1</scope>
    <scope>SUBCELLULAR LOCATION</scope>
    <scope>DEVELOPMENTAL STAGE</scope>
    <scope>INDUCTION</scope>
</reference>
<proteinExistence type="evidence at protein level"/>
<sequence>MFECRIDGQFFKKLFETLKDICTEVNLECDENGIKMQSMDCSHVSLVDLNIVSDFFQHYRCDKNCVLGISINFMLKILSVIKEKSTVFLFKEDNENDAVLNIGIIDEEEQSSADDSLEIQVKLINAQKEHLEIPQSEYHCQCTMKSKKFQEFTKYLNSIGDNVSISMKKDAMILSTTGSDIKVTKQFTNDMTDISITCTKSVSQEFATRYLVMFSRASSLSDEVLISLSPHIPISIKFNFKQQLTDLQDPSHLTFFLAPKIGDY</sequence>
<dbReference type="EMBL" id="AF544241">
    <property type="protein sequence ID" value="AAN34792.1"/>
    <property type="molecule type" value="mRNA"/>
</dbReference>
<dbReference type="EMBL" id="AF056205">
    <property type="protein sequence ID" value="AAG37983.1"/>
    <property type="molecule type" value="Genomic_DNA"/>
</dbReference>
<dbReference type="EMBL" id="LN999947">
    <property type="protein sequence ID" value="CZT99425.1"/>
    <property type="molecule type" value="Genomic_DNA"/>
</dbReference>
<dbReference type="RefSeq" id="XP_001350663.1">
    <property type="nucleotide sequence ID" value="XM_001350627.1"/>
</dbReference>
<dbReference type="SMR" id="Q7KQJ9"/>
<dbReference type="FunCoup" id="Q7KQJ9">
    <property type="interactions" value="65"/>
</dbReference>
<dbReference type="STRING" id="36329.Q7KQJ9"/>
<dbReference type="PaxDb" id="5833-PFL1285c"/>
<dbReference type="EnsemblProtists" id="CZT99425">
    <property type="protein sequence ID" value="CZT99425"/>
    <property type="gene ID" value="PF3D7_1226600"/>
</dbReference>
<dbReference type="GeneID" id="811309"/>
<dbReference type="KEGG" id="pfa:PF3D7_1226600"/>
<dbReference type="VEuPathDB" id="PlasmoDB:PF3D7_1226600"/>
<dbReference type="VEuPathDB" id="PlasmoDB:Pf7G8-2_000376400"/>
<dbReference type="VEuPathDB" id="PlasmoDB:Pf7G8_120032100"/>
<dbReference type="VEuPathDB" id="PlasmoDB:PfCD01_120031500"/>
<dbReference type="VEuPathDB" id="PlasmoDB:PfDd2_120031600"/>
<dbReference type="VEuPathDB" id="PlasmoDB:PfGA01_120031300"/>
<dbReference type="VEuPathDB" id="PlasmoDB:PfGB4_120032000"/>
<dbReference type="VEuPathDB" id="PlasmoDB:PfGN01_120032600"/>
<dbReference type="VEuPathDB" id="PlasmoDB:PfHB3_120031400"/>
<dbReference type="VEuPathDB" id="PlasmoDB:PfIT_120031700"/>
<dbReference type="VEuPathDB" id="PlasmoDB:PfKE01_120031600"/>
<dbReference type="VEuPathDB" id="PlasmoDB:PfKH01_120033000"/>
<dbReference type="VEuPathDB" id="PlasmoDB:PfKH02_120031700"/>
<dbReference type="VEuPathDB" id="PlasmoDB:PfML01_120031800"/>
<dbReference type="VEuPathDB" id="PlasmoDB:PfNF135_120031800"/>
<dbReference type="VEuPathDB" id="PlasmoDB:PfNF166_120033200"/>
<dbReference type="VEuPathDB" id="PlasmoDB:PfNF54_120031400"/>
<dbReference type="VEuPathDB" id="PlasmoDB:PfSD01_120031500"/>
<dbReference type="VEuPathDB" id="PlasmoDB:PfSN01_120032200"/>
<dbReference type="VEuPathDB" id="PlasmoDB:PfTG01_120031500"/>
<dbReference type="HOGENOM" id="CLU_043978_3_0_1"/>
<dbReference type="InParanoid" id="Q7KQJ9"/>
<dbReference type="OMA" id="MDNSHIS"/>
<dbReference type="OrthoDB" id="534348at2759"/>
<dbReference type="PhylomeDB" id="Q7KQJ9"/>
<dbReference type="Proteomes" id="UP000001450">
    <property type="component" value="Chromosome 12"/>
</dbReference>
<dbReference type="GO" id="GO:0005694">
    <property type="term" value="C:chromosome"/>
    <property type="evidence" value="ECO:0007669"/>
    <property type="project" value="UniProtKB-SubCell"/>
</dbReference>
<dbReference type="GO" id="GO:0005737">
    <property type="term" value="C:cytoplasm"/>
    <property type="evidence" value="ECO:0007669"/>
    <property type="project" value="UniProtKB-SubCell"/>
</dbReference>
<dbReference type="GO" id="GO:0005634">
    <property type="term" value="C:nucleus"/>
    <property type="evidence" value="ECO:0000314"/>
    <property type="project" value="UniProtKB"/>
</dbReference>
<dbReference type="GO" id="GO:0043626">
    <property type="term" value="C:PCNA complex"/>
    <property type="evidence" value="ECO:0000318"/>
    <property type="project" value="GO_Central"/>
</dbReference>
<dbReference type="GO" id="GO:0003677">
    <property type="term" value="F:DNA binding"/>
    <property type="evidence" value="ECO:0007669"/>
    <property type="project" value="UniProtKB-KW"/>
</dbReference>
<dbReference type="GO" id="GO:0030337">
    <property type="term" value="F:DNA polymerase processivity factor activity"/>
    <property type="evidence" value="ECO:0000318"/>
    <property type="project" value="GO_Central"/>
</dbReference>
<dbReference type="GO" id="GO:0006272">
    <property type="term" value="P:leading strand elongation"/>
    <property type="evidence" value="ECO:0000318"/>
    <property type="project" value="GO_Central"/>
</dbReference>
<dbReference type="GO" id="GO:0006298">
    <property type="term" value="P:mismatch repair"/>
    <property type="evidence" value="ECO:0000318"/>
    <property type="project" value="GO_Central"/>
</dbReference>
<dbReference type="GO" id="GO:0045739">
    <property type="term" value="P:positive regulation of DNA repair"/>
    <property type="evidence" value="ECO:0000314"/>
    <property type="project" value="UniProtKB"/>
</dbReference>
<dbReference type="GO" id="GO:0051259">
    <property type="term" value="P:protein complex oligomerization"/>
    <property type="evidence" value="ECO:0000314"/>
    <property type="project" value="GeneDB"/>
</dbReference>
<dbReference type="GO" id="GO:0006275">
    <property type="term" value="P:regulation of DNA replication"/>
    <property type="evidence" value="ECO:0007669"/>
    <property type="project" value="InterPro"/>
</dbReference>
<dbReference type="GO" id="GO:0019985">
    <property type="term" value="P:translesion synthesis"/>
    <property type="evidence" value="ECO:0000318"/>
    <property type="project" value="GO_Central"/>
</dbReference>
<dbReference type="CDD" id="cd00577">
    <property type="entry name" value="PCNA"/>
    <property type="match status" value="1"/>
</dbReference>
<dbReference type="FunFam" id="3.70.10.10:FF:000009">
    <property type="entry name" value="Proliferating cell nuclear antigen"/>
    <property type="match status" value="1"/>
</dbReference>
<dbReference type="Gene3D" id="3.70.10.10">
    <property type="match status" value="1"/>
</dbReference>
<dbReference type="HAMAP" id="MF_00317">
    <property type="entry name" value="DNApol_clamp_arch"/>
    <property type="match status" value="1"/>
</dbReference>
<dbReference type="InterPro" id="IPR046938">
    <property type="entry name" value="DNA_clamp_sf"/>
</dbReference>
<dbReference type="InterPro" id="IPR000730">
    <property type="entry name" value="Pr_cel_nuc_antig"/>
</dbReference>
<dbReference type="InterPro" id="IPR022649">
    <property type="entry name" value="Pr_cel_nuc_antig_C"/>
</dbReference>
<dbReference type="InterPro" id="IPR022659">
    <property type="entry name" value="Pr_cel_nuc_antig_CS"/>
</dbReference>
<dbReference type="InterPro" id="IPR022648">
    <property type="entry name" value="Pr_cel_nuc_antig_N"/>
</dbReference>
<dbReference type="NCBIfam" id="TIGR00590">
    <property type="entry name" value="pcna"/>
    <property type="match status" value="1"/>
</dbReference>
<dbReference type="PANTHER" id="PTHR11352">
    <property type="entry name" value="PROLIFERATING CELL NUCLEAR ANTIGEN"/>
    <property type="match status" value="1"/>
</dbReference>
<dbReference type="PANTHER" id="PTHR11352:SF0">
    <property type="entry name" value="PROLIFERATING CELL NUCLEAR ANTIGEN"/>
    <property type="match status" value="1"/>
</dbReference>
<dbReference type="Pfam" id="PF02747">
    <property type="entry name" value="PCNA_C"/>
    <property type="match status" value="1"/>
</dbReference>
<dbReference type="Pfam" id="PF00705">
    <property type="entry name" value="PCNA_N"/>
    <property type="match status" value="1"/>
</dbReference>
<dbReference type="PRINTS" id="PR00339">
    <property type="entry name" value="PCNACYCLIN"/>
</dbReference>
<dbReference type="SUPFAM" id="SSF55979">
    <property type="entry name" value="DNA clamp"/>
    <property type="match status" value="2"/>
</dbReference>
<dbReference type="PROSITE" id="PS01251">
    <property type="entry name" value="PCNA_1"/>
    <property type="match status" value="1"/>
</dbReference>
<name>PCNA2_PLAF7</name>
<organism evidence="10">
    <name type="scientific">Plasmodium falciparum (isolate 3D7)</name>
    <dbReference type="NCBI Taxonomy" id="36329"/>
    <lineage>
        <taxon>Eukaryota</taxon>
        <taxon>Sar</taxon>
        <taxon>Alveolata</taxon>
        <taxon>Apicomplexa</taxon>
        <taxon>Aconoidasida</taxon>
        <taxon>Haemosporida</taxon>
        <taxon>Plasmodiidae</taxon>
        <taxon>Plasmodium</taxon>
        <taxon>Plasmodium (Laverania)</taxon>
    </lineage>
</organism>